<gene>
    <name evidence="1" type="primary">ileS</name>
    <name type="ordered locus">PFLU_0768</name>
</gene>
<dbReference type="EC" id="6.1.1.5" evidence="1"/>
<dbReference type="EMBL" id="AM181176">
    <property type="protein sequence ID" value="CAY47037.1"/>
    <property type="molecule type" value="Genomic_DNA"/>
</dbReference>
<dbReference type="RefSeq" id="WP_012722139.1">
    <property type="nucleotide sequence ID" value="NC_012660.1"/>
</dbReference>
<dbReference type="SMR" id="C3KDX4"/>
<dbReference type="STRING" id="294.SRM1_04902"/>
<dbReference type="PATRIC" id="fig|216595.4.peg.1004"/>
<dbReference type="eggNOG" id="COG0060">
    <property type="taxonomic scope" value="Bacteria"/>
</dbReference>
<dbReference type="HOGENOM" id="CLU_001493_7_1_6"/>
<dbReference type="OrthoDB" id="9810365at2"/>
<dbReference type="GO" id="GO:0005829">
    <property type="term" value="C:cytosol"/>
    <property type="evidence" value="ECO:0007669"/>
    <property type="project" value="TreeGrafter"/>
</dbReference>
<dbReference type="GO" id="GO:0002161">
    <property type="term" value="F:aminoacyl-tRNA deacylase activity"/>
    <property type="evidence" value="ECO:0007669"/>
    <property type="project" value="InterPro"/>
</dbReference>
<dbReference type="GO" id="GO:0005524">
    <property type="term" value="F:ATP binding"/>
    <property type="evidence" value="ECO:0007669"/>
    <property type="project" value="UniProtKB-UniRule"/>
</dbReference>
<dbReference type="GO" id="GO:0004822">
    <property type="term" value="F:isoleucine-tRNA ligase activity"/>
    <property type="evidence" value="ECO:0007669"/>
    <property type="project" value="UniProtKB-UniRule"/>
</dbReference>
<dbReference type="GO" id="GO:0000049">
    <property type="term" value="F:tRNA binding"/>
    <property type="evidence" value="ECO:0007669"/>
    <property type="project" value="InterPro"/>
</dbReference>
<dbReference type="GO" id="GO:0008270">
    <property type="term" value="F:zinc ion binding"/>
    <property type="evidence" value="ECO:0007669"/>
    <property type="project" value="UniProtKB-UniRule"/>
</dbReference>
<dbReference type="GO" id="GO:0006428">
    <property type="term" value="P:isoleucyl-tRNA aminoacylation"/>
    <property type="evidence" value="ECO:0007669"/>
    <property type="project" value="UniProtKB-UniRule"/>
</dbReference>
<dbReference type="CDD" id="cd07960">
    <property type="entry name" value="Anticodon_Ia_Ile_BEm"/>
    <property type="match status" value="1"/>
</dbReference>
<dbReference type="FunFam" id="1.10.730.20:FF:000001">
    <property type="entry name" value="Isoleucine--tRNA ligase"/>
    <property type="match status" value="1"/>
</dbReference>
<dbReference type="FunFam" id="3.40.50.620:FF:000042">
    <property type="entry name" value="Isoleucine--tRNA ligase"/>
    <property type="match status" value="1"/>
</dbReference>
<dbReference type="FunFam" id="3.40.50.620:FF:000048">
    <property type="entry name" value="Isoleucine--tRNA ligase"/>
    <property type="match status" value="1"/>
</dbReference>
<dbReference type="Gene3D" id="1.10.730.20">
    <property type="match status" value="1"/>
</dbReference>
<dbReference type="Gene3D" id="3.40.50.620">
    <property type="entry name" value="HUPs"/>
    <property type="match status" value="2"/>
</dbReference>
<dbReference type="Gene3D" id="3.90.740.10">
    <property type="entry name" value="Valyl/Leucyl/Isoleucyl-tRNA synthetase, editing domain"/>
    <property type="match status" value="1"/>
</dbReference>
<dbReference type="HAMAP" id="MF_02002">
    <property type="entry name" value="Ile_tRNA_synth_type1"/>
    <property type="match status" value="1"/>
</dbReference>
<dbReference type="InterPro" id="IPR001412">
    <property type="entry name" value="aa-tRNA-synth_I_CS"/>
</dbReference>
<dbReference type="InterPro" id="IPR002300">
    <property type="entry name" value="aa-tRNA-synth_Ia"/>
</dbReference>
<dbReference type="InterPro" id="IPR033708">
    <property type="entry name" value="Anticodon_Ile_BEm"/>
</dbReference>
<dbReference type="InterPro" id="IPR002301">
    <property type="entry name" value="Ile-tRNA-ligase"/>
</dbReference>
<dbReference type="InterPro" id="IPR023585">
    <property type="entry name" value="Ile-tRNA-ligase_type1"/>
</dbReference>
<dbReference type="InterPro" id="IPR050081">
    <property type="entry name" value="Ile-tRNA_ligase"/>
</dbReference>
<dbReference type="InterPro" id="IPR013155">
    <property type="entry name" value="M/V/L/I-tRNA-synth_anticd-bd"/>
</dbReference>
<dbReference type="InterPro" id="IPR014729">
    <property type="entry name" value="Rossmann-like_a/b/a_fold"/>
</dbReference>
<dbReference type="InterPro" id="IPR009080">
    <property type="entry name" value="tRNAsynth_Ia_anticodon-bd"/>
</dbReference>
<dbReference type="InterPro" id="IPR009008">
    <property type="entry name" value="Val/Leu/Ile-tRNA-synth_edit"/>
</dbReference>
<dbReference type="InterPro" id="IPR010663">
    <property type="entry name" value="Znf_FPG/IleRS"/>
</dbReference>
<dbReference type="NCBIfam" id="TIGR00392">
    <property type="entry name" value="ileS"/>
    <property type="match status" value="1"/>
</dbReference>
<dbReference type="PANTHER" id="PTHR42765:SF1">
    <property type="entry name" value="ISOLEUCINE--TRNA LIGASE, MITOCHONDRIAL"/>
    <property type="match status" value="1"/>
</dbReference>
<dbReference type="PANTHER" id="PTHR42765">
    <property type="entry name" value="SOLEUCYL-TRNA SYNTHETASE"/>
    <property type="match status" value="1"/>
</dbReference>
<dbReference type="Pfam" id="PF08264">
    <property type="entry name" value="Anticodon_1"/>
    <property type="match status" value="1"/>
</dbReference>
<dbReference type="Pfam" id="PF00133">
    <property type="entry name" value="tRNA-synt_1"/>
    <property type="match status" value="1"/>
</dbReference>
<dbReference type="Pfam" id="PF06827">
    <property type="entry name" value="zf-FPG_IleRS"/>
    <property type="match status" value="1"/>
</dbReference>
<dbReference type="PRINTS" id="PR00984">
    <property type="entry name" value="TRNASYNTHILE"/>
</dbReference>
<dbReference type="SUPFAM" id="SSF47323">
    <property type="entry name" value="Anticodon-binding domain of a subclass of class I aminoacyl-tRNA synthetases"/>
    <property type="match status" value="1"/>
</dbReference>
<dbReference type="SUPFAM" id="SSF52374">
    <property type="entry name" value="Nucleotidylyl transferase"/>
    <property type="match status" value="1"/>
</dbReference>
<dbReference type="SUPFAM" id="SSF50677">
    <property type="entry name" value="ValRS/IleRS/LeuRS editing domain"/>
    <property type="match status" value="1"/>
</dbReference>
<dbReference type="PROSITE" id="PS00178">
    <property type="entry name" value="AA_TRNA_LIGASE_I"/>
    <property type="match status" value="1"/>
</dbReference>
<feature type="chain" id="PRO_1000216244" description="Isoleucine--tRNA ligase">
    <location>
        <begin position="1"/>
        <end position="943"/>
    </location>
</feature>
<feature type="short sequence motif" description="'HIGH' region">
    <location>
        <begin position="58"/>
        <end position="68"/>
    </location>
</feature>
<feature type="short sequence motif" description="'KMSKS' region">
    <location>
        <begin position="608"/>
        <end position="612"/>
    </location>
</feature>
<feature type="binding site" evidence="1">
    <location>
        <position position="567"/>
    </location>
    <ligand>
        <name>L-isoleucyl-5'-AMP</name>
        <dbReference type="ChEBI" id="CHEBI:178002"/>
    </ligand>
</feature>
<feature type="binding site" evidence="1">
    <location>
        <position position="611"/>
    </location>
    <ligand>
        <name>ATP</name>
        <dbReference type="ChEBI" id="CHEBI:30616"/>
    </ligand>
</feature>
<feature type="binding site" evidence="1">
    <location>
        <position position="906"/>
    </location>
    <ligand>
        <name>Zn(2+)</name>
        <dbReference type="ChEBI" id="CHEBI:29105"/>
    </ligand>
</feature>
<feature type="binding site" evidence="1">
    <location>
        <position position="909"/>
    </location>
    <ligand>
        <name>Zn(2+)</name>
        <dbReference type="ChEBI" id="CHEBI:29105"/>
    </ligand>
</feature>
<feature type="binding site" evidence="1">
    <location>
        <position position="926"/>
    </location>
    <ligand>
        <name>Zn(2+)</name>
        <dbReference type="ChEBI" id="CHEBI:29105"/>
    </ligand>
</feature>
<feature type="binding site" evidence="1">
    <location>
        <position position="929"/>
    </location>
    <ligand>
        <name>Zn(2+)</name>
        <dbReference type="ChEBI" id="CHEBI:29105"/>
    </ligand>
</feature>
<name>SYI_PSEFS</name>
<keyword id="KW-0030">Aminoacyl-tRNA synthetase</keyword>
<keyword id="KW-0067">ATP-binding</keyword>
<keyword id="KW-0963">Cytoplasm</keyword>
<keyword id="KW-0436">Ligase</keyword>
<keyword id="KW-0479">Metal-binding</keyword>
<keyword id="KW-0547">Nucleotide-binding</keyword>
<keyword id="KW-0648">Protein biosynthesis</keyword>
<keyword id="KW-0862">Zinc</keyword>
<accession>C3KDX4</accession>
<organism>
    <name type="scientific">Pseudomonas fluorescens (strain SBW25)</name>
    <dbReference type="NCBI Taxonomy" id="216595"/>
    <lineage>
        <taxon>Bacteria</taxon>
        <taxon>Pseudomonadati</taxon>
        <taxon>Pseudomonadota</taxon>
        <taxon>Gammaproteobacteria</taxon>
        <taxon>Pseudomonadales</taxon>
        <taxon>Pseudomonadaceae</taxon>
        <taxon>Pseudomonas</taxon>
    </lineage>
</organism>
<evidence type="ECO:0000255" key="1">
    <source>
        <dbReference type="HAMAP-Rule" id="MF_02002"/>
    </source>
</evidence>
<proteinExistence type="inferred from homology"/>
<sequence length="943" mass="105453">MTDYKATLNLPDTAFPMKAGLPQREPQILQRWDSIGLYGKLREIGKDRPKFVLHDGPPYANGTIHIGHALNKILKDMILRSKTLSGFDAPYVPGWDCHGLPIEHKVEVTYGKNLGADKTRELCRAYATEQIEGQKSEFIRLGVLGEWDNPYKTMNFKNEAGEIRALAEIVKGGFVFKGLKPVNWCFDCGSALAEAEVEYEDKKSSTIDVAFPVADDAKLAEAFGLASLSKPAAIVIWTTTPWTIPANQALNVHPEFTYALVDVGDRLLVLAEEMVEACLARYELQGSVIATTTGSALELINFRHPFYDRLSPVYLADYVELGAGTGIVHSAPAYGVDDFVTCKAYGMVNDDILNPVQSNGVYAPSLEFFGGQFIFKANDSIIDKLSEVGSLLHTETIKHSYMHCWRHKTPLIYRATAQWFIGMDKEPTSGDTLRVRSLKAIEDTQFVPAWGQARLHSMIANRPDWCISRQRNWGVPIPFFLNKESGELHPRTVELMEEVAQRVELEGIEAWFKMDAAELLGDEAPQYDKISDTLDVWFDSGTTHWHVLRGSHPMGHETGPRADLYLEGSDQHRGWFHSSLLTGCAIDNHAPYRELLTHGFTVDETGRKMSKSLKNVIEPKKINDTLGADIMRLWVASTDYSGEIAVSDQILARSADAYRRIRNTARFLLSNLTGFNPATDILPAEDMLALDRWAVDRTLLLQRELQENYGEYRFWNVYSKIHNFCVQELGGFYLDIIKDRQYTTGANSKARRSAQTALYHISEALVRWIAPILAFTADELWEYLPGERNESVMLNTWYEGLTELPADFELGREYWEGVMAVKVAVNKELEVQRAAKAVGGNLQAEVTLFAEAGLTADLAKLSNELRFVLITSTASLAPFAQAPADAVATEVPGLKLKVVKSAFPKCARCWHCREDVGVNPEHPEICGRCVDNISGAGEVRHYA</sequence>
<comment type="function">
    <text evidence="1">Catalyzes the attachment of isoleucine to tRNA(Ile). As IleRS can inadvertently accommodate and process structurally similar amino acids such as valine, to avoid such errors it has two additional distinct tRNA(Ile)-dependent editing activities. One activity is designated as 'pretransfer' editing and involves the hydrolysis of activated Val-AMP. The other activity is designated 'posttransfer' editing and involves deacylation of mischarged Val-tRNA(Ile).</text>
</comment>
<comment type="catalytic activity">
    <reaction evidence="1">
        <text>tRNA(Ile) + L-isoleucine + ATP = L-isoleucyl-tRNA(Ile) + AMP + diphosphate</text>
        <dbReference type="Rhea" id="RHEA:11060"/>
        <dbReference type="Rhea" id="RHEA-COMP:9666"/>
        <dbReference type="Rhea" id="RHEA-COMP:9695"/>
        <dbReference type="ChEBI" id="CHEBI:30616"/>
        <dbReference type="ChEBI" id="CHEBI:33019"/>
        <dbReference type="ChEBI" id="CHEBI:58045"/>
        <dbReference type="ChEBI" id="CHEBI:78442"/>
        <dbReference type="ChEBI" id="CHEBI:78528"/>
        <dbReference type="ChEBI" id="CHEBI:456215"/>
        <dbReference type="EC" id="6.1.1.5"/>
    </reaction>
</comment>
<comment type="cofactor">
    <cofactor evidence="1">
        <name>Zn(2+)</name>
        <dbReference type="ChEBI" id="CHEBI:29105"/>
    </cofactor>
    <text evidence="1">Binds 1 zinc ion per subunit.</text>
</comment>
<comment type="subunit">
    <text evidence="1">Monomer.</text>
</comment>
<comment type="subcellular location">
    <subcellularLocation>
        <location evidence="1">Cytoplasm</location>
    </subcellularLocation>
</comment>
<comment type="domain">
    <text evidence="1">IleRS has two distinct active sites: one for aminoacylation and one for editing. The misactivated valine is translocated from the active site to the editing site, which sterically excludes the correctly activated isoleucine. The single editing site contains two valyl binding pockets, one specific for each substrate (Val-AMP or Val-tRNA(Ile)).</text>
</comment>
<comment type="similarity">
    <text evidence="1">Belongs to the class-I aminoacyl-tRNA synthetase family. IleS type 1 subfamily.</text>
</comment>
<protein>
    <recommendedName>
        <fullName evidence="1">Isoleucine--tRNA ligase</fullName>
        <ecNumber evidence="1">6.1.1.5</ecNumber>
    </recommendedName>
    <alternativeName>
        <fullName evidence="1">Isoleucyl-tRNA synthetase</fullName>
        <shortName evidence="1">IleRS</shortName>
    </alternativeName>
</protein>
<reference key="1">
    <citation type="journal article" date="2009" name="Genome Biol.">
        <title>Genomic and genetic analyses of diversity and plant interactions of Pseudomonas fluorescens.</title>
        <authorList>
            <person name="Silby M.W."/>
            <person name="Cerdeno-Tarraga A.M."/>
            <person name="Vernikos G.S."/>
            <person name="Giddens S.R."/>
            <person name="Jackson R.W."/>
            <person name="Preston G.M."/>
            <person name="Zhang X.-X."/>
            <person name="Moon C.D."/>
            <person name="Gehrig S.M."/>
            <person name="Godfrey S.A.C."/>
            <person name="Knight C.G."/>
            <person name="Malone J.G."/>
            <person name="Robinson Z."/>
            <person name="Spiers A.J."/>
            <person name="Harris S."/>
            <person name="Challis G.L."/>
            <person name="Yaxley A.M."/>
            <person name="Harris D."/>
            <person name="Seeger K."/>
            <person name="Murphy L."/>
            <person name="Rutter S."/>
            <person name="Squares R."/>
            <person name="Quail M.A."/>
            <person name="Saunders E."/>
            <person name="Mavromatis K."/>
            <person name="Brettin T.S."/>
            <person name="Bentley S.D."/>
            <person name="Hothersall J."/>
            <person name="Stephens E."/>
            <person name="Thomas C.M."/>
            <person name="Parkhill J."/>
            <person name="Levy S.B."/>
            <person name="Rainey P.B."/>
            <person name="Thomson N.R."/>
        </authorList>
    </citation>
    <scope>NUCLEOTIDE SEQUENCE [LARGE SCALE GENOMIC DNA]</scope>
    <source>
        <strain>SBW25</strain>
    </source>
</reference>